<feature type="chain" id="PRO_0000096330" description="Structural protein MDM1">
    <location>
        <begin position="1"/>
        <end position="1127"/>
    </location>
</feature>
<feature type="domain" description="PXA" evidence="2 3">
    <location>
        <begin position="85"/>
        <end position="273"/>
    </location>
</feature>
<feature type="domain" description="PX" evidence="2">
    <location>
        <begin position="782"/>
        <end position="905"/>
    </location>
</feature>
<feature type="coiled-coil region" evidence="1">
    <location>
        <begin position="705"/>
        <end position="762"/>
    </location>
</feature>
<feature type="modified residue" description="Phosphoserine" evidence="7">
    <location>
        <position position="670"/>
    </location>
</feature>
<feature type="modified residue" description="Phosphoserine" evidence="7">
    <location>
        <position position="673"/>
    </location>
</feature>
<feature type="modified residue" description="Phosphoserine" evidence="7">
    <location>
        <position position="692"/>
    </location>
</feature>
<feature type="sequence conflict" description="In Ref. 3; CAA47014." evidence="6" ref="3">
    <original>H</original>
    <variation>D</variation>
    <location>
        <position position="635"/>
    </location>
</feature>
<feature type="sequence conflict" description="In Ref. 3; CAA47014." evidence="6" ref="3">
    <original>Q</original>
    <variation>R</variation>
    <location>
        <position position="772"/>
    </location>
</feature>
<feature type="sequence conflict" description="In Ref. 3; CAA47014." evidence="6" ref="3">
    <original>T</original>
    <variation>I</variation>
    <location>
        <position position="899"/>
    </location>
</feature>
<feature type="sequence conflict" description="In Ref. 3; CAA47014." evidence="6" ref="3">
    <original>R</original>
    <variation>K</variation>
    <location>
        <position position="1063"/>
    </location>
</feature>
<feature type="sequence conflict" description="In Ref. 3; CAA47014." evidence="6" ref="3">
    <original>T</original>
    <variation>S</variation>
    <location>
        <position position="1081"/>
    </location>
</feature>
<feature type="sequence conflict" description="In Ref. 3; CAA47014." evidence="6" ref="3">
    <original>G</original>
    <variation>R</variation>
    <location>
        <position position="1096"/>
    </location>
</feature>
<proteinExistence type="evidence at protein level"/>
<reference key="1">
    <citation type="journal article" date="1997" name="Nature">
        <title>The nucleotide sequence of Saccharomyces cerevisiae chromosome XIII.</title>
        <authorList>
            <person name="Bowman S."/>
            <person name="Churcher C.M."/>
            <person name="Badcock K."/>
            <person name="Brown D."/>
            <person name="Chillingworth T."/>
            <person name="Connor R."/>
            <person name="Dedman K."/>
            <person name="Devlin K."/>
            <person name="Gentles S."/>
            <person name="Hamlin N."/>
            <person name="Hunt S."/>
            <person name="Jagels K."/>
            <person name="Lye G."/>
            <person name="Moule S."/>
            <person name="Odell C."/>
            <person name="Pearson D."/>
            <person name="Rajandream M.A."/>
            <person name="Rice P."/>
            <person name="Skelton J."/>
            <person name="Walsh S.V."/>
            <person name="Whitehead S."/>
            <person name="Barrell B.G."/>
        </authorList>
    </citation>
    <scope>NUCLEOTIDE SEQUENCE [LARGE SCALE GENOMIC DNA]</scope>
    <source>
        <strain>ATCC 204508 / S288c</strain>
    </source>
</reference>
<reference key="2">
    <citation type="journal article" date="2014" name="G3 (Bethesda)">
        <title>The reference genome sequence of Saccharomyces cerevisiae: Then and now.</title>
        <authorList>
            <person name="Engel S.R."/>
            <person name="Dietrich F.S."/>
            <person name="Fisk D.G."/>
            <person name="Binkley G."/>
            <person name="Balakrishnan R."/>
            <person name="Costanzo M.C."/>
            <person name="Dwight S.S."/>
            <person name="Hitz B.C."/>
            <person name="Karra K."/>
            <person name="Nash R.S."/>
            <person name="Weng S."/>
            <person name="Wong E.D."/>
            <person name="Lloyd P."/>
            <person name="Skrzypek M.S."/>
            <person name="Miyasato S.R."/>
            <person name="Simison M."/>
            <person name="Cherry J.M."/>
        </authorList>
    </citation>
    <scope>GENOME REANNOTATION</scope>
    <source>
        <strain>ATCC 204508 / S288c</strain>
    </source>
</reference>
<reference key="3">
    <citation type="journal article" date="1992" name="J. Cell Biol.">
        <title>Nuclear and mitochondrial inheritance in yeast depends on novel cytoplasmic structures defined by the MDM1 protein.</title>
        <authorList>
            <person name="McConnell S.J."/>
            <person name="Yaffe M.P."/>
        </authorList>
    </citation>
    <scope>NUCLEOTIDE SEQUENCE [GENOMIC DNA] OF 633-1127</scope>
    <scope>FUNCTION</scope>
    <scope>SUBCELLULAR LOCATION</scope>
</reference>
<reference key="4">
    <citation type="submission" date="1995-02" db="EMBL/GenBank/DDBJ databases">
        <authorList>
            <person name="Stirling C.J."/>
        </authorList>
    </citation>
    <scope>NUCLEOTIDE SEQUENCE [GENOMIC DNA] OF 874-1127</scope>
</reference>
<reference key="5">
    <citation type="journal article" date="2003" name="Nature">
        <title>Global analysis of protein expression in yeast.</title>
        <authorList>
            <person name="Ghaemmaghami S."/>
            <person name="Huh W.-K."/>
            <person name="Bower K."/>
            <person name="Howson R.W."/>
            <person name="Belle A."/>
            <person name="Dephoure N."/>
            <person name="O'Shea E.K."/>
            <person name="Weissman J.S."/>
        </authorList>
    </citation>
    <scope>LEVEL OF PROTEIN EXPRESSION [LARGE SCALE ANALYSIS]</scope>
</reference>
<reference key="6">
    <citation type="journal article" date="2009" name="Science">
        <title>Global analysis of Cdk1 substrate phosphorylation sites provides insights into evolution.</title>
        <authorList>
            <person name="Holt L.J."/>
            <person name="Tuch B.B."/>
            <person name="Villen J."/>
            <person name="Johnson A.D."/>
            <person name="Gygi S.P."/>
            <person name="Morgan D.O."/>
        </authorList>
    </citation>
    <scope>PHOSPHORYLATION [LARGE SCALE ANALYSIS] AT SER-670; SER-673 AND SER-692</scope>
    <scope>IDENTIFICATION BY MASS SPECTROMETRY [LARGE SCALE ANALYSIS]</scope>
</reference>
<organism>
    <name type="scientific">Saccharomyces cerevisiae (strain ATCC 204508 / S288c)</name>
    <name type="common">Baker's yeast</name>
    <dbReference type="NCBI Taxonomy" id="559292"/>
    <lineage>
        <taxon>Eukaryota</taxon>
        <taxon>Fungi</taxon>
        <taxon>Dikarya</taxon>
        <taxon>Ascomycota</taxon>
        <taxon>Saccharomycotina</taxon>
        <taxon>Saccharomycetes</taxon>
        <taxon>Saccharomycetales</taxon>
        <taxon>Saccharomycetaceae</taxon>
        <taxon>Saccharomyces</taxon>
    </lineage>
</organism>
<evidence type="ECO:0000255" key="1"/>
<evidence type="ECO:0000255" key="2">
    <source>
        <dbReference type="PROSITE-ProRule" id="PRU00147"/>
    </source>
</evidence>
<evidence type="ECO:0000255" key="3">
    <source>
        <dbReference type="PROSITE-ProRule" id="PRU00553"/>
    </source>
</evidence>
<evidence type="ECO:0000269" key="4">
    <source>
    </source>
</evidence>
<evidence type="ECO:0000269" key="5">
    <source>
    </source>
</evidence>
<evidence type="ECO:0000305" key="6"/>
<evidence type="ECO:0007744" key="7">
    <source>
    </source>
</evidence>
<protein>
    <recommendedName>
        <fullName>Structural protein MDM1</fullName>
    </recommendedName>
    <alternativeName>
        <fullName>Mitochondrial distribution and morphology protein 1</fullName>
    </alternativeName>
</protein>
<name>MDM1_YEAST</name>
<sequence>MPKFPQFRLILVLFYLISMIQWSVITFSLGFFLNVCIFAYFVFFKSLPDLPKPQPRFVDIVPESSNTVDVDKELKSVEGLIQDGNAQIGKELESIVNLIIKDFVQPWFTKIDKNSDAEFLKVIKWRLLQTLLVVKDKLMKNDSASLIVLKLLPIFNKHFSTFCDAREAVLSDLTLERHKSANIDLQIAVEFNKNYKIHKSLSLKPNALQKEIEKSIRKTVIGLLPHLFDNDELDSLLVFTLMTEVLTTCIISPLIFKFTDPDSWNLRIVSLSQNYFEEKHKVHKIRRMLSKELQDHRKVMNDVANKDVGEPSSEKLELNAEYTGKQFEHYLNQLDSLLDLSDIKYVAYSLALKIYQLKENEHLTKENLKYKKRLLLSLNLIESKLSFPGSEIDTASKKLAREANYPDLNMDNGIVLKEMASFLTSITLKDIVDDSEFLPFFESFLGSVPETQGSTFLEYSQTIESFKNPLEDATSEDIISGYSGISTMQLQEISSKFFHNNNLQNMKLLDEGLVKNIILFRNSFQINNDEDTFILARKSVLLLQTEAIKYLDDRFLPLFKKTPSFLKMLSTSHIISTDIYAHFLSRIGGVNNPEQNKIIKDNVKTDFMNPVRIFANPGITDALDNIVNGSGSKPHKSRISSNPRYSQLFGSENDNIFKDKLFDDENDNTSEISVVEDQLDHPRNMEKVSVSSGNSGLNPSQFYGSNNFRDNIASLTISIDQIEKELELLRHLILKADLTNNQMQLKILKKSQRTLLKELEMKELLKQQYMVQENGNSLFRKTKIYIRSYFSENSSNGLKEITYYIINIHHFNNGQVSSWDMARRYNEFFELNTYLKKNFRDLMRQLQDLFPSKVKMSLKYHVTKTLLYEERKQKLEKYLRELLSISEICEDNIFRRFLTDPTPFKLNKEYMHDDILEEPLHEPIGSSNSTSNSSSVVDLQSSEDGGELNFYEDERHFFTDSGYPFYSQNKSFVKQICDLFISLFALNKANAGWLRGRAIITVLQQLLGSTIEKYIKVSIQKLRSEDQVFEAIVTFKNMLWGDNGLFERKRNETAEATRSEGERLRTEQLALTSLQRLFADTCGRVVGLRDSHEAAGRVHAMLQNPYLNASLLLEALDAILLDIICND</sequence>
<dbReference type="EMBL" id="X80835">
    <property type="protein sequence ID" value="CAA56793.1"/>
    <property type="molecule type" value="Genomic_DNA"/>
</dbReference>
<dbReference type="EMBL" id="Z49210">
    <property type="protein sequence ID" value="CAA89114.1"/>
    <property type="status" value="ALT_INIT"/>
    <property type="molecule type" value="Genomic_DNA"/>
</dbReference>
<dbReference type="EMBL" id="X66371">
    <property type="protein sequence ID" value="CAA47014.1"/>
    <property type="status" value="ALT_FRAME"/>
    <property type="molecule type" value="Genomic_DNA"/>
</dbReference>
<dbReference type="EMBL" id="X65783">
    <property type="protein sequence ID" value="CAA46664.1"/>
    <property type="molecule type" value="Genomic_DNA"/>
</dbReference>
<dbReference type="EMBL" id="BK006946">
    <property type="protein sequence ID" value="DAA09794.1"/>
    <property type="molecule type" value="Genomic_DNA"/>
</dbReference>
<dbReference type="PIR" id="S47445">
    <property type="entry name" value="S47445"/>
</dbReference>
<dbReference type="RefSeq" id="NP_013603.1">
    <property type="nucleotide sequence ID" value="NM_001182466.1"/>
</dbReference>
<dbReference type="SMR" id="Q01846"/>
<dbReference type="BioGRID" id="35039">
    <property type="interactions" value="122"/>
</dbReference>
<dbReference type="DIP" id="DIP-810N"/>
<dbReference type="FunCoup" id="Q01846">
    <property type="interactions" value="68"/>
</dbReference>
<dbReference type="IntAct" id="Q01846">
    <property type="interactions" value="3"/>
</dbReference>
<dbReference type="MINT" id="Q01846"/>
<dbReference type="STRING" id="4932.YML104C"/>
<dbReference type="GlyGen" id="Q01846">
    <property type="glycosylation" value="3 sites, 1 O-linked glycan (3 sites)"/>
</dbReference>
<dbReference type="iPTMnet" id="Q01846"/>
<dbReference type="PaxDb" id="4932-YML104C"/>
<dbReference type="PeptideAtlas" id="Q01846"/>
<dbReference type="EnsemblFungi" id="YML104C_mRNA">
    <property type="protein sequence ID" value="YML104C"/>
    <property type="gene ID" value="YML104C"/>
</dbReference>
<dbReference type="GeneID" id="854867"/>
<dbReference type="KEGG" id="sce:YML104C"/>
<dbReference type="AGR" id="SGD:S000004572"/>
<dbReference type="SGD" id="S000004572">
    <property type="gene designation" value="MDM1"/>
</dbReference>
<dbReference type="VEuPathDB" id="FungiDB:YML104C"/>
<dbReference type="eggNOG" id="KOG2101">
    <property type="taxonomic scope" value="Eukaryota"/>
</dbReference>
<dbReference type="GeneTree" id="ENSGT00950000182856"/>
<dbReference type="HOGENOM" id="CLU_002131_1_0_1"/>
<dbReference type="InParanoid" id="Q01846"/>
<dbReference type="OMA" id="AMYVVEV"/>
<dbReference type="OrthoDB" id="120967at2759"/>
<dbReference type="BioCyc" id="YEAST:G3O-32688-MONOMER"/>
<dbReference type="BioGRID-ORCS" id="854867">
    <property type="hits" value="10 hits in 10 CRISPR screens"/>
</dbReference>
<dbReference type="PRO" id="PR:Q01846"/>
<dbReference type="Proteomes" id="UP000002311">
    <property type="component" value="Chromosome XIII"/>
</dbReference>
<dbReference type="RNAct" id="Q01846">
    <property type="molecule type" value="protein"/>
</dbReference>
<dbReference type="GO" id="GO:0071944">
    <property type="term" value="C:cell periphery"/>
    <property type="evidence" value="ECO:0007005"/>
    <property type="project" value="SGD"/>
</dbReference>
<dbReference type="GO" id="GO:0005737">
    <property type="term" value="C:cytoplasm"/>
    <property type="evidence" value="ECO:0007005"/>
    <property type="project" value="SGD"/>
</dbReference>
<dbReference type="GO" id="GO:0000324">
    <property type="term" value="C:fungal-type vacuole"/>
    <property type="evidence" value="ECO:0007005"/>
    <property type="project" value="SGD"/>
</dbReference>
<dbReference type="GO" id="GO:0043231">
    <property type="term" value="C:intracellular membrane-bounded organelle"/>
    <property type="evidence" value="ECO:0000318"/>
    <property type="project" value="GO_Central"/>
</dbReference>
<dbReference type="GO" id="GO:0071561">
    <property type="term" value="C:nucleus-vacuole junction"/>
    <property type="evidence" value="ECO:0000314"/>
    <property type="project" value="SGD"/>
</dbReference>
<dbReference type="GO" id="GO:0035091">
    <property type="term" value="F:phosphatidylinositol binding"/>
    <property type="evidence" value="ECO:0000318"/>
    <property type="project" value="GO_Central"/>
</dbReference>
<dbReference type="GO" id="GO:0032266">
    <property type="term" value="F:phosphatidylinositol-3-phosphate binding"/>
    <property type="evidence" value="ECO:0000314"/>
    <property type="project" value="SGD"/>
</dbReference>
<dbReference type="GO" id="GO:0000001">
    <property type="term" value="P:mitochondrion inheritance"/>
    <property type="evidence" value="ECO:0000315"/>
    <property type="project" value="SGD"/>
</dbReference>
<dbReference type="GO" id="GO:0034727">
    <property type="term" value="P:piecemeal microautophagy of the nucleus"/>
    <property type="evidence" value="ECO:0000315"/>
    <property type="project" value="SGD"/>
</dbReference>
<dbReference type="GO" id="GO:1990854">
    <property type="term" value="P:vacuole-ER tethering"/>
    <property type="evidence" value="ECO:0000315"/>
    <property type="project" value="SGD"/>
</dbReference>
<dbReference type="CDD" id="cd06876">
    <property type="entry name" value="PX_MDM1p"/>
    <property type="match status" value="1"/>
</dbReference>
<dbReference type="Gene3D" id="3.30.1520.10">
    <property type="entry name" value="Phox-like domain"/>
    <property type="match status" value="1"/>
</dbReference>
<dbReference type="InterPro" id="IPR003114">
    <property type="entry name" value="Phox_assoc"/>
</dbReference>
<dbReference type="InterPro" id="IPR001683">
    <property type="entry name" value="PX_dom"/>
</dbReference>
<dbReference type="InterPro" id="IPR036871">
    <property type="entry name" value="PX_dom_sf"/>
</dbReference>
<dbReference type="InterPro" id="IPR013937">
    <property type="entry name" value="Sorting_nexin_C"/>
</dbReference>
<dbReference type="PANTHER" id="PTHR22775">
    <property type="entry name" value="SORTING NEXIN"/>
    <property type="match status" value="1"/>
</dbReference>
<dbReference type="PANTHER" id="PTHR22775:SF3">
    <property type="entry name" value="SORTING NEXIN-13"/>
    <property type="match status" value="1"/>
</dbReference>
<dbReference type="Pfam" id="PF08628">
    <property type="entry name" value="Nexin_C"/>
    <property type="match status" value="1"/>
</dbReference>
<dbReference type="Pfam" id="PF00787">
    <property type="entry name" value="PX"/>
    <property type="match status" value="1"/>
</dbReference>
<dbReference type="Pfam" id="PF02194">
    <property type="entry name" value="PXA"/>
    <property type="match status" value="1"/>
</dbReference>
<dbReference type="SMART" id="SM00312">
    <property type="entry name" value="PX"/>
    <property type="match status" value="1"/>
</dbReference>
<dbReference type="SMART" id="SM00313">
    <property type="entry name" value="PXA"/>
    <property type="match status" value="1"/>
</dbReference>
<dbReference type="SUPFAM" id="SSF64268">
    <property type="entry name" value="PX domain"/>
    <property type="match status" value="1"/>
</dbReference>
<dbReference type="PROSITE" id="PS50195">
    <property type="entry name" value="PX"/>
    <property type="match status" value="1"/>
</dbReference>
<dbReference type="PROSITE" id="PS51207">
    <property type="entry name" value="PXA"/>
    <property type="match status" value="1"/>
</dbReference>
<gene>
    <name type="primary">MDM1</name>
    <name type="ordered locus">YML104C</name>
    <name type="ORF">YM8339.15C</name>
</gene>
<comment type="function">
    <text evidence="4">Essential for mitotic growth. Mediates organelle inheritance.</text>
</comment>
<comment type="subcellular location">
    <subcellularLocation>
        <location evidence="4">Cytoplasm</location>
    </subcellularLocation>
</comment>
<comment type="miscellaneous">
    <text evidence="5">Present with 784 molecules/cell in log phase SD medium.</text>
</comment>
<comment type="similarity">
    <text evidence="6">Belongs to the sorting nexin family.</text>
</comment>
<comment type="sequence caution" evidence="6">
    <conflict type="frameshift">
        <sequence resource="EMBL-CDS" id="CAA47014"/>
    </conflict>
</comment>
<comment type="sequence caution" evidence="6">
    <conflict type="erroneous initiation">
        <sequence resource="EMBL-CDS" id="CAA89114"/>
    </conflict>
</comment>
<accession>Q01846</accession>
<accession>D6W0I0</accession>
<accession>Q04196</accession>
<keyword id="KW-0175">Coiled coil</keyword>
<keyword id="KW-0963">Cytoplasm</keyword>
<keyword id="KW-0597">Phosphoprotein</keyword>
<keyword id="KW-1185">Reference proteome</keyword>